<gene>
    <name type="primary">RnrL</name>
    <name type="ORF">CG5371</name>
</gene>
<protein>
    <recommendedName>
        <fullName>Ribonucleoside-diphosphate reductase large subunit</fullName>
        <ecNumber>1.17.4.1</ecNumber>
    </recommendedName>
    <alternativeName>
        <fullName>Ribonucleoside-diphosphate reductase subunit M1</fullName>
    </alternativeName>
    <alternativeName>
        <fullName>Ribonucleotide reductase large subunit</fullName>
    </alternativeName>
</protein>
<proteinExistence type="evidence at protein level"/>
<feature type="chain" id="PRO_0000187193" description="Ribonucleoside-diphosphate reductase large subunit">
    <location>
        <begin position="1"/>
        <end position="812"/>
    </location>
</feature>
<feature type="domain" description="ATP-cone" evidence="3">
    <location>
        <begin position="12"/>
        <end position="103"/>
    </location>
</feature>
<feature type="active site" description="Proton acceptor" evidence="1">
    <location>
        <position position="438"/>
    </location>
</feature>
<feature type="active site" description="Cysteine radical intermediate" evidence="1">
    <location>
        <position position="440"/>
    </location>
</feature>
<feature type="active site" description="Proton acceptor" evidence="1">
    <location>
        <position position="442"/>
    </location>
</feature>
<feature type="binding site" evidence="2">
    <location>
        <begin position="16"/>
        <end position="17"/>
    </location>
    <ligand>
        <name>ATP</name>
        <dbReference type="ChEBI" id="CHEBI:30616"/>
        <note>allosteric activator</note>
    </ligand>
</feature>
<feature type="binding site" evidence="2">
    <location>
        <begin position="22"/>
        <end position="28"/>
    </location>
    <ligand>
        <name>ATP</name>
        <dbReference type="ChEBI" id="CHEBI:30616"/>
        <note>allosteric activator</note>
    </ligand>
</feature>
<feature type="binding site" evidence="2">
    <location>
        <position position="64"/>
    </location>
    <ligand>
        <name>ATP</name>
        <dbReference type="ChEBI" id="CHEBI:30616"/>
        <note>allosteric activator</note>
    </ligand>
</feature>
<feature type="binding site" evidence="2">
    <location>
        <position position="68"/>
    </location>
    <ligand>
        <name>ATP</name>
        <dbReference type="ChEBI" id="CHEBI:30616"/>
        <note>allosteric activator</note>
    </ligand>
</feature>
<feature type="binding site" evidence="2">
    <location>
        <position position="213"/>
    </location>
    <ligand>
        <name>GDP</name>
        <dbReference type="ChEBI" id="CHEBI:58189"/>
    </ligand>
</feature>
<feature type="binding site" evidence="2">
    <location>
        <position position="228"/>
    </location>
    <ligand>
        <name>GDP</name>
        <dbReference type="ChEBI" id="CHEBI:58189"/>
    </ligand>
</feature>
<feature type="binding site" evidence="2">
    <location>
        <begin position="237"/>
        <end position="239"/>
    </location>
    <ligand>
        <name>dTTP</name>
        <dbReference type="ChEBI" id="CHEBI:37568"/>
        <note>allosteric effector that controls substrate specificity</note>
    </ligand>
</feature>
<feature type="binding site" evidence="2">
    <location>
        <position position="254"/>
    </location>
    <ligand>
        <name>dTTP</name>
        <dbReference type="ChEBI" id="CHEBI:37568"/>
        <note>allosteric effector that controls substrate specificity</note>
    </ligand>
</feature>
<feature type="binding site" evidence="2">
    <location>
        <position position="267"/>
    </location>
    <ligand>
        <name>dTTP</name>
        <dbReference type="ChEBI" id="CHEBI:37568"/>
        <note>allosteric effector that controls substrate specificity</note>
    </ligand>
</feature>
<feature type="binding site" evidence="2">
    <location>
        <begin position="274"/>
        <end position="275"/>
    </location>
    <ligand>
        <name>dTTP</name>
        <dbReference type="ChEBI" id="CHEBI:37568"/>
        <note>allosteric effector that controls substrate specificity</note>
    </ligand>
</feature>
<feature type="binding site" evidence="2">
    <location>
        <position position="438"/>
    </location>
    <ligand>
        <name>GDP</name>
        <dbReference type="ChEBI" id="CHEBI:58189"/>
    </ligand>
</feature>
<feature type="binding site" evidence="2">
    <location>
        <position position="442"/>
    </location>
    <ligand>
        <name>GDP</name>
        <dbReference type="ChEBI" id="CHEBI:58189"/>
    </ligand>
</feature>
<feature type="binding site" evidence="2">
    <location>
        <begin position="615"/>
        <end position="618"/>
    </location>
    <ligand>
        <name>GDP</name>
        <dbReference type="ChEBI" id="CHEBI:58189"/>
    </ligand>
</feature>
<feature type="site" description="Important for hydrogen atom transfer" evidence="1">
    <location>
        <position position="229"/>
    </location>
</feature>
<feature type="site" description="Important for hydrogen atom transfer" evidence="1">
    <location>
        <position position="455"/>
    </location>
</feature>
<feature type="site" description="Important for electron transfer" evidence="1">
    <location>
        <position position="748"/>
    </location>
</feature>
<feature type="site" description="Important for electron transfer" evidence="1">
    <location>
        <position position="749"/>
    </location>
</feature>
<feature type="site" description="Interacts with thioredoxin/glutaredoxin" evidence="1">
    <location>
        <position position="807"/>
    </location>
</feature>
<feature type="site" description="Interacts with thioredoxin/glutaredoxin" evidence="1">
    <location>
        <position position="810"/>
    </location>
</feature>
<feature type="modified residue" description="Phosphothreonine" evidence="4">
    <location>
        <position position="778"/>
    </location>
</feature>
<feature type="modified residue" description="Phosphoserine" evidence="4">
    <location>
        <position position="782"/>
    </location>
</feature>
<feature type="modified residue" description="Phosphotyrosine" evidence="4">
    <location>
        <position position="786"/>
    </location>
</feature>
<feature type="disulfide bond" description="Redox-active" evidence="1">
    <location>
        <begin position="229"/>
        <end position="455"/>
    </location>
</feature>
<accession>P48591</accession>
<accession>Q9UB08</accession>
<accession>Q9VKZ3</accession>
<reference key="1">
    <citation type="journal article" date="2000" name="Science">
        <title>The genome sequence of Drosophila melanogaster.</title>
        <authorList>
            <person name="Adams M.D."/>
            <person name="Celniker S.E."/>
            <person name="Holt R.A."/>
            <person name="Evans C.A."/>
            <person name="Gocayne J.D."/>
            <person name="Amanatides P.G."/>
            <person name="Scherer S.E."/>
            <person name="Li P.W."/>
            <person name="Hoskins R.A."/>
            <person name="Galle R.F."/>
            <person name="George R.A."/>
            <person name="Lewis S.E."/>
            <person name="Richards S."/>
            <person name="Ashburner M."/>
            <person name="Henderson S.N."/>
            <person name="Sutton G.G."/>
            <person name="Wortman J.R."/>
            <person name="Yandell M.D."/>
            <person name="Zhang Q."/>
            <person name="Chen L.X."/>
            <person name="Brandon R.C."/>
            <person name="Rogers Y.-H.C."/>
            <person name="Blazej R.G."/>
            <person name="Champe M."/>
            <person name="Pfeiffer B.D."/>
            <person name="Wan K.H."/>
            <person name="Doyle C."/>
            <person name="Baxter E.G."/>
            <person name="Helt G."/>
            <person name="Nelson C.R."/>
            <person name="Miklos G.L.G."/>
            <person name="Abril J.F."/>
            <person name="Agbayani A."/>
            <person name="An H.-J."/>
            <person name="Andrews-Pfannkoch C."/>
            <person name="Baldwin D."/>
            <person name="Ballew R.M."/>
            <person name="Basu A."/>
            <person name="Baxendale J."/>
            <person name="Bayraktaroglu L."/>
            <person name="Beasley E.M."/>
            <person name="Beeson K.Y."/>
            <person name="Benos P.V."/>
            <person name="Berman B.P."/>
            <person name="Bhandari D."/>
            <person name="Bolshakov S."/>
            <person name="Borkova D."/>
            <person name="Botchan M.R."/>
            <person name="Bouck J."/>
            <person name="Brokstein P."/>
            <person name="Brottier P."/>
            <person name="Burtis K.C."/>
            <person name="Busam D.A."/>
            <person name="Butler H."/>
            <person name="Cadieu E."/>
            <person name="Center A."/>
            <person name="Chandra I."/>
            <person name="Cherry J.M."/>
            <person name="Cawley S."/>
            <person name="Dahlke C."/>
            <person name="Davenport L.B."/>
            <person name="Davies P."/>
            <person name="de Pablos B."/>
            <person name="Delcher A."/>
            <person name="Deng Z."/>
            <person name="Mays A.D."/>
            <person name="Dew I."/>
            <person name="Dietz S.M."/>
            <person name="Dodson K."/>
            <person name="Doup L.E."/>
            <person name="Downes M."/>
            <person name="Dugan-Rocha S."/>
            <person name="Dunkov B.C."/>
            <person name="Dunn P."/>
            <person name="Durbin K.J."/>
            <person name="Evangelista C.C."/>
            <person name="Ferraz C."/>
            <person name="Ferriera S."/>
            <person name="Fleischmann W."/>
            <person name="Fosler C."/>
            <person name="Gabrielian A.E."/>
            <person name="Garg N.S."/>
            <person name="Gelbart W.M."/>
            <person name="Glasser K."/>
            <person name="Glodek A."/>
            <person name="Gong F."/>
            <person name="Gorrell J.H."/>
            <person name="Gu Z."/>
            <person name="Guan P."/>
            <person name="Harris M."/>
            <person name="Harris N.L."/>
            <person name="Harvey D.A."/>
            <person name="Heiman T.J."/>
            <person name="Hernandez J.R."/>
            <person name="Houck J."/>
            <person name="Hostin D."/>
            <person name="Houston K.A."/>
            <person name="Howland T.J."/>
            <person name="Wei M.-H."/>
            <person name="Ibegwam C."/>
            <person name="Jalali M."/>
            <person name="Kalush F."/>
            <person name="Karpen G.H."/>
            <person name="Ke Z."/>
            <person name="Kennison J.A."/>
            <person name="Ketchum K.A."/>
            <person name="Kimmel B.E."/>
            <person name="Kodira C.D."/>
            <person name="Kraft C.L."/>
            <person name="Kravitz S."/>
            <person name="Kulp D."/>
            <person name="Lai Z."/>
            <person name="Lasko P."/>
            <person name="Lei Y."/>
            <person name="Levitsky A.A."/>
            <person name="Li J.H."/>
            <person name="Li Z."/>
            <person name="Liang Y."/>
            <person name="Lin X."/>
            <person name="Liu X."/>
            <person name="Mattei B."/>
            <person name="McIntosh T.C."/>
            <person name="McLeod M.P."/>
            <person name="McPherson D."/>
            <person name="Merkulov G."/>
            <person name="Milshina N.V."/>
            <person name="Mobarry C."/>
            <person name="Morris J."/>
            <person name="Moshrefi A."/>
            <person name="Mount S.M."/>
            <person name="Moy M."/>
            <person name="Murphy B."/>
            <person name="Murphy L."/>
            <person name="Muzny D.M."/>
            <person name="Nelson D.L."/>
            <person name="Nelson D.R."/>
            <person name="Nelson K.A."/>
            <person name="Nixon K."/>
            <person name="Nusskern D.R."/>
            <person name="Pacleb J.M."/>
            <person name="Palazzolo M."/>
            <person name="Pittman G.S."/>
            <person name="Pan S."/>
            <person name="Pollard J."/>
            <person name="Puri V."/>
            <person name="Reese M.G."/>
            <person name="Reinert K."/>
            <person name="Remington K."/>
            <person name="Saunders R.D.C."/>
            <person name="Scheeler F."/>
            <person name="Shen H."/>
            <person name="Shue B.C."/>
            <person name="Siden-Kiamos I."/>
            <person name="Simpson M."/>
            <person name="Skupski M.P."/>
            <person name="Smith T.J."/>
            <person name="Spier E."/>
            <person name="Spradling A.C."/>
            <person name="Stapleton M."/>
            <person name="Strong R."/>
            <person name="Sun E."/>
            <person name="Svirskas R."/>
            <person name="Tector C."/>
            <person name="Turner R."/>
            <person name="Venter E."/>
            <person name="Wang A.H."/>
            <person name="Wang X."/>
            <person name="Wang Z.-Y."/>
            <person name="Wassarman D.A."/>
            <person name="Weinstock G.M."/>
            <person name="Weissenbach J."/>
            <person name="Williams S.M."/>
            <person name="Woodage T."/>
            <person name="Worley K.C."/>
            <person name="Wu D."/>
            <person name="Yang S."/>
            <person name="Yao Q.A."/>
            <person name="Ye J."/>
            <person name="Yeh R.-F."/>
            <person name="Zaveri J.S."/>
            <person name="Zhan M."/>
            <person name="Zhang G."/>
            <person name="Zhao Q."/>
            <person name="Zheng L."/>
            <person name="Zheng X.H."/>
            <person name="Zhong F.N."/>
            <person name="Zhong W."/>
            <person name="Zhou X."/>
            <person name="Zhu S.C."/>
            <person name="Zhu X."/>
            <person name="Smith H.O."/>
            <person name="Gibbs R.A."/>
            <person name="Myers E.W."/>
            <person name="Rubin G.M."/>
            <person name="Venter J.C."/>
        </authorList>
    </citation>
    <scope>NUCLEOTIDE SEQUENCE [LARGE SCALE GENOMIC DNA]</scope>
    <source>
        <strain>Berkeley</strain>
    </source>
</reference>
<reference key="2">
    <citation type="journal article" date="2002" name="Genome Biol.">
        <title>Annotation of the Drosophila melanogaster euchromatic genome: a systematic review.</title>
        <authorList>
            <person name="Misra S."/>
            <person name="Crosby M.A."/>
            <person name="Mungall C.J."/>
            <person name="Matthews B.B."/>
            <person name="Campbell K.S."/>
            <person name="Hradecky P."/>
            <person name="Huang Y."/>
            <person name="Kaminker J.S."/>
            <person name="Millburn G.H."/>
            <person name="Prochnik S.E."/>
            <person name="Smith C.D."/>
            <person name="Tupy J.L."/>
            <person name="Whitfield E.J."/>
            <person name="Bayraktaroglu L."/>
            <person name="Berman B.P."/>
            <person name="Bettencourt B.R."/>
            <person name="Celniker S.E."/>
            <person name="de Grey A.D.N.J."/>
            <person name="Drysdale R.A."/>
            <person name="Harris N.L."/>
            <person name="Richter J."/>
            <person name="Russo S."/>
            <person name="Schroeder A.J."/>
            <person name="Shu S.Q."/>
            <person name="Stapleton M."/>
            <person name="Yamada C."/>
            <person name="Ashburner M."/>
            <person name="Gelbart W.M."/>
            <person name="Rubin G.M."/>
            <person name="Lewis S.E."/>
        </authorList>
    </citation>
    <scope>GENOME REANNOTATION</scope>
    <source>
        <strain>Berkeley</strain>
    </source>
</reference>
<reference key="3">
    <citation type="journal article" date="2000" name="Science">
        <title>A Drosophila complementary DNA resource.</title>
        <authorList>
            <person name="Rubin G.M."/>
            <person name="Hong L."/>
            <person name="Brokstein P."/>
            <person name="Evans-Holm M."/>
            <person name="Frise E."/>
            <person name="Stapleton M."/>
            <person name="Harvey D.A."/>
        </authorList>
    </citation>
    <scope>NUCLEOTIDE SEQUENCE [LARGE SCALE MRNA]</scope>
    <source>
        <strain>Berkeley</strain>
        <tissue>Embryo</tissue>
    </source>
</reference>
<reference key="4">
    <citation type="journal article" date="1994" name="Development">
        <title>Developmental control of a G1-S transcriptional program in Drosophila.</title>
        <authorList>
            <person name="Duronio R.J."/>
            <person name="O'Farrell P.H."/>
        </authorList>
    </citation>
    <scope>NUCLEOTIDE SEQUENCE [GENOMIC DNA] OF 164-343</scope>
    <source>
        <strain>Oregon-R</strain>
    </source>
</reference>
<reference key="5">
    <citation type="journal article" date="2008" name="J. Proteome Res.">
        <title>Phosphoproteome analysis of Drosophila melanogaster embryos.</title>
        <authorList>
            <person name="Zhai B."/>
            <person name="Villen J."/>
            <person name="Beausoleil S.A."/>
            <person name="Mintseris J."/>
            <person name="Gygi S.P."/>
        </authorList>
    </citation>
    <scope>PHOSPHORYLATION [LARGE SCALE ANALYSIS] AT THR-778; SER-782 AND TYR-786</scope>
    <scope>IDENTIFICATION BY MASS SPECTROMETRY</scope>
    <source>
        <tissue>Embryo</tissue>
    </source>
</reference>
<organism>
    <name type="scientific">Drosophila melanogaster</name>
    <name type="common">Fruit fly</name>
    <dbReference type="NCBI Taxonomy" id="7227"/>
    <lineage>
        <taxon>Eukaryota</taxon>
        <taxon>Metazoa</taxon>
        <taxon>Ecdysozoa</taxon>
        <taxon>Arthropoda</taxon>
        <taxon>Hexapoda</taxon>
        <taxon>Insecta</taxon>
        <taxon>Pterygota</taxon>
        <taxon>Neoptera</taxon>
        <taxon>Endopterygota</taxon>
        <taxon>Diptera</taxon>
        <taxon>Brachycera</taxon>
        <taxon>Muscomorpha</taxon>
        <taxon>Ephydroidea</taxon>
        <taxon>Drosophilidae</taxon>
        <taxon>Drosophila</taxon>
        <taxon>Sophophora</taxon>
    </lineage>
</organism>
<evidence type="ECO:0000250" key="1"/>
<evidence type="ECO:0000250" key="2">
    <source>
        <dbReference type="UniProtKB" id="P23921"/>
    </source>
</evidence>
<evidence type="ECO:0000255" key="3">
    <source>
        <dbReference type="PROSITE-ProRule" id="PRU00492"/>
    </source>
</evidence>
<evidence type="ECO:0000269" key="4">
    <source>
    </source>
</evidence>
<evidence type="ECO:0000305" key="5"/>
<keyword id="KW-0021">Allosteric enzyme</keyword>
<keyword id="KW-0067">ATP-binding</keyword>
<keyword id="KW-0215">Deoxyribonucleotide synthesis</keyword>
<keyword id="KW-1015">Disulfide bond</keyword>
<keyword id="KW-0547">Nucleotide-binding</keyword>
<keyword id="KW-0560">Oxidoreductase</keyword>
<keyword id="KW-0597">Phosphoprotein</keyword>
<keyword id="KW-1185">Reference proteome</keyword>
<comment type="function">
    <text>Provides the precursors necessary for DNA synthesis. Catalyzes the biosynthesis of deoxyribonucleotides from the corresponding ribonucleotides.</text>
</comment>
<comment type="catalytic activity">
    <reaction>
        <text>a 2'-deoxyribonucleoside 5'-diphosphate + [thioredoxin]-disulfide + H2O = a ribonucleoside 5'-diphosphate + [thioredoxin]-dithiol</text>
        <dbReference type="Rhea" id="RHEA:23252"/>
        <dbReference type="Rhea" id="RHEA-COMP:10698"/>
        <dbReference type="Rhea" id="RHEA-COMP:10700"/>
        <dbReference type="ChEBI" id="CHEBI:15377"/>
        <dbReference type="ChEBI" id="CHEBI:29950"/>
        <dbReference type="ChEBI" id="CHEBI:50058"/>
        <dbReference type="ChEBI" id="CHEBI:57930"/>
        <dbReference type="ChEBI" id="CHEBI:73316"/>
        <dbReference type="EC" id="1.17.4.1"/>
    </reaction>
</comment>
<comment type="activity regulation">
    <text evidence="1">Under complex allosteric control mediated by deoxynucleoside triphosphates and ATP binding to separate specificity and activation sites on the M1 subunit. The type of nucleotide bound at the specificity site determines substrate preference. It seems probable that ATP makes the enzyme reduce CDP and UDP, dGTP favors ADP reduction and dTTP favors GDP reduction. Stimulated by ATP and inhibited by dATP binding to the activity site (By similarity).</text>
</comment>
<comment type="subunit">
    <text>Heterodimer of a large and a small subunit.</text>
</comment>
<comment type="similarity">
    <text evidence="5">Belongs to the ribonucleoside diphosphate reductase large chain family.</text>
</comment>
<dbReference type="EC" id="1.17.4.1"/>
<dbReference type="EMBL" id="AE014134">
    <property type="protein sequence ID" value="AAF52913.2"/>
    <property type="molecule type" value="Genomic_DNA"/>
</dbReference>
<dbReference type="EMBL" id="AF132143">
    <property type="protein sequence ID" value="AAD33590.1"/>
    <property type="molecule type" value="mRNA"/>
</dbReference>
<dbReference type="EMBL" id="AY119149">
    <property type="protein sequence ID" value="AAM51009.1"/>
    <property type="molecule type" value="mRNA"/>
</dbReference>
<dbReference type="EMBL" id="U09369">
    <property type="protein sequence ID" value="AAA56995.1"/>
    <property type="molecule type" value="Genomic_DNA"/>
</dbReference>
<dbReference type="RefSeq" id="NP_477027.1">
    <property type="nucleotide sequence ID" value="NM_057679.5"/>
</dbReference>
<dbReference type="SMR" id="P48591"/>
<dbReference type="BioGRID" id="60477">
    <property type="interactions" value="9"/>
</dbReference>
<dbReference type="DIP" id="DIP-19582N"/>
<dbReference type="FunCoup" id="P48591">
    <property type="interactions" value="1269"/>
</dbReference>
<dbReference type="IntAct" id="P48591">
    <property type="interactions" value="2"/>
</dbReference>
<dbReference type="STRING" id="7227.FBpp0079648"/>
<dbReference type="GlyGen" id="P48591">
    <property type="glycosylation" value="1 site"/>
</dbReference>
<dbReference type="iPTMnet" id="P48591"/>
<dbReference type="PaxDb" id="7227-FBpp0079648"/>
<dbReference type="EnsemblMetazoa" id="FBtr0080059">
    <property type="protein sequence ID" value="FBpp0079648"/>
    <property type="gene ID" value="FBgn0011703"/>
</dbReference>
<dbReference type="GeneID" id="34392"/>
<dbReference type="KEGG" id="dme:Dmel_CG5371"/>
<dbReference type="AGR" id="FB:FBgn0011703"/>
<dbReference type="CTD" id="34392"/>
<dbReference type="FlyBase" id="FBgn0011703">
    <property type="gene designation" value="RnrL"/>
</dbReference>
<dbReference type="VEuPathDB" id="VectorBase:FBgn0011703"/>
<dbReference type="eggNOG" id="KOG1112">
    <property type="taxonomic scope" value="Eukaryota"/>
</dbReference>
<dbReference type="GeneTree" id="ENSGT00910000144246"/>
<dbReference type="HOGENOM" id="CLU_000404_1_0_1"/>
<dbReference type="InParanoid" id="P48591"/>
<dbReference type="OMA" id="IELPQHM"/>
<dbReference type="OrthoDB" id="3000483at2759"/>
<dbReference type="PhylomeDB" id="P48591"/>
<dbReference type="Reactome" id="R-DME-499943">
    <property type="pathway name" value="Interconversion of nucleotide di- and triphosphates"/>
</dbReference>
<dbReference type="BioGRID-ORCS" id="34392">
    <property type="hits" value="2 hits in 3 CRISPR screens"/>
</dbReference>
<dbReference type="GenomeRNAi" id="34392"/>
<dbReference type="PRO" id="PR:P48591"/>
<dbReference type="Proteomes" id="UP000000803">
    <property type="component" value="Chromosome 2L"/>
</dbReference>
<dbReference type="Bgee" id="FBgn0011703">
    <property type="expression patterns" value="Expressed in secondary oocyte and 61 other cell types or tissues"/>
</dbReference>
<dbReference type="GO" id="GO:0005971">
    <property type="term" value="C:ribonucleoside-diphosphate reductase complex"/>
    <property type="evidence" value="ECO:0000318"/>
    <property type="project" value="GO_Central"/>
</dbReference>
<dbReference type="GO" id="GO:0005524">
    <property type="term" value="F:ATP binding"/>
    <property type="evidence" value="ECO:0000318"/>
    <property type="project" value="GO_Central"/>
</dbReference>
<dbReference type="GO" id="GO:0004748">
    <property type="term" value="F:ribonucleoside-diphosphate reductase activity, thioredoxin disulfide as acceptor"/>
    <property type="evidence" value="ECO:0000250"/>
    <property type="project" value="UniProtKB"/>
</dbReference>
<dbReference type="GO" id="GO:0009263">
    <property type="term" value="P:deoxyribonucleotide biosynthetic process"/>
    <property type="evidence" value="ECO:0000250"/>
    <property type="project" value="UniProtKB"/>
</dbReference>
<dbReference type="GO" id="GO:0042246">
    <property type="term" value="P:tissue regeneration"/>
    <property type="evidence" value="ECO:0000315"/>
    <property type="project" value="FlyBase"/>
</dbReference>
<dbReference type="CDD" id="cd01679">
    <property type="entry name" value="RNR_I"/>
    <property type="match status" value="1"/>
</dbReference>
<dbReference type="FunFam" id="3.20.70.20:FF:000001">
    <property type="entry name" value="Ribonucleoside-diphosphate reductase"/>
    <property type="match status" value="1"/>
</dbReference>
<dbReference type="Gene3D" id="3.20.70.20">
    <property type="match status" value="1"/>
</dbReference>
<dbReference type="InterPro" id="IPR005144">
    <property type="entry name" value="ATP-cone_dom"/>
</dbReference>
<dbReference type="InterPro" id="IPR013346">
    <property type="entry name" value="NrdE_NrdA_C"/>
</dbReference>
<dbReference type="InterPro" id="IPR000788">
    <property type="entry name" value="RNR_lg_C"/>
</dbReference>
<dbReference type="InterPro" id="IPR013509">
    <property type="entry name" value="RNR_lsu_N"/>
</dbReference>
<dbReference type="InterPro" id="IPR008926">
    <property type="entry name" value="RNR_R1-su_N"/>
</dbReference>
<dbReference type="InterPro" id="IPR039718">
    <property type="entry name" value="Rrm1"/>
</dbReference>
<dbReference type="NCBIfam" id="TIGR02506">
    <property type="entry name" value="NrdE_NrdA"/>
    <property type="match status" value="1"/>
</dbReference>
<dbReference type="PANTHER" id="PTHR11573">
    <property type="entry name" value="RIBONUCLEOSIDE-DIPHOSPHATE REDUCTASE LARGE CHAIN"/>
    <property type="match status" value="1"/>
</dbReference>
<dbReference type="PANTHER" id="PTHR11573:SF6">
    <property type="entry name" value="RIBONUCLEOSIDE-DIPHOSPHATE REDUCTASE LARGE SUBUNIT"/>
    <property type="match status" value="1"/>
</dbReference>
<dbReference type="Pfam" id="PF03477">
    <property type="entry name" value="ATP-cone"/>
    <property type="match status" value="1"/>
</dbReference>
<dbReference type="Pfam" id="PF02867">
    <property type="entry name" value="Ribonuc_red_lgC"/>
    <property type="match status" value="1"/>
</dbReference>
<dbReference type="Pfam" id="PF00317">
    <property type="entry name" value="Ribonuc_red_lgN"/>
    <property type="match status" value="1"/>
</dbReference>
<dbReference type="PRINTS" id="PR01183">
    <property type="entry name" value="RIBORDTASEM1"/>
</dbReference>
<dbReference type="SUPFAM" id="SSF51998">
    <property type="entry name" value="PFL-like glycyl radical enzymes"/>
    <property type="match status" value="1"/>
</dbReference>
<dbReference type="SUPFAM" id="SSF48168">
    <property type="entry name" value="R1 subunit of ribonucleotide reductase, N-terminal domain"/>
    <property type="match status" value="1"/>
</dbReference>
<dbReference type="PROSITE" id="PS51161">
    <property type="entry name" value="ATP_CONE"/>
    <property type="match status" value="1"/>
</dbReference>
<dbReference type="PROSITE" id="PS00089">
    <property type="entry name" value="RIBORED_LARGE"/>
    <property type="match status" value="1"/>
</dbReference>
<name>RIR1_DROME</name>
<sequence>MLKNKSMKTSKLYVIKRDGRQEEVHFDKITSRIQKLCYNLNMDFVDPVTITLQVINGLYCGVTTQELDNLAAEIAAGLTCNHPDYAILAARIAVSNLHKETKKAFSDVFEDLYNHVNKETNQKVPLVSEFHYNVVKKNATRLNSSIIYDRDFGYNYFGFKTLERSYLLKRNGKIAERPQHMLMRVAIGIHGEDIDAAVETYNLLSERYFTHASPTLFAAATNRPQLSSCFLLTMTADSIEGIFKSVEQCAMISKSAGGIGLNVHCIRAKGTSICGTNGTSNGLVPMLRVFNNVARYVDQGGGKRPGAFAIYLEPWHSDVFEFLELKKNTGKEENRARDLFYALWIPDLFMKRVEANGDWSLMCPHKCPGLHDVWGDEFEKLYEKYEQEGRANRTVKAQSLWFAIIEAQVETGNPYMLFKDACNRKSNQQNVGTIKCSNLCTEIVEYSAPDEIAVCNLASIALNMFVTPEKTYDFKKLKEVTKIVTKNLNKIIDINYYPLPEARKSNLRHRPVGIGIQGFADALILMRFPYESEEAGLLNQQIFETIYYGALEASCELAQTEGPYETYEGSPVSKGILQYDMWDKVPTNLWDWQKLKESIRMHGVRNSLLVAPMPTASTAQIMGNNESFEPYTTNIYTRRVLSGEFQVVNHHLLRDLTELDLWDDDMKNQIISSRGSIQNIETIPPKVRDLYKTVWEISVKSTIKMAADRGAFIDQSQSFNIHVAEPNYGKLTSIHFYSWKAGLKTGMYYLRTKPAANAIQFTVNKKQGAVSMNGQNGTAEGSPQKYEEDRERKMADMVCSLENKDACMSCGS</sequence>